<feature type="chain" id="PRO_1000198791" description="Indole-3-glycerol phosphate synthase">
    <location>
        <begin position="1"/>
        <end position="255"/>
    </location>
</feature>
<keyword id="KW-0028">Amino-acid biosynthesis</keyword>
<keyword id="KW-0057">Aromatic amino acid biosynthesis</keyword>
<keyword id="KW-0210">Decarboxylase</keyword>
<keyword id="KW-0456">Lyase</keyword>
<keyword id="KW-0822">Tryptophan biosynthesis</keyword>
<reference key="1">
    <citation type="journal article" date="2010" name="Genome Biol.">
        <title>Structure and dynamics of the pan-genome of Streptococcus pneumoniae and closely related species.</title>
        <authorList>
            <person name="Donati C."/>
            <person name="Hiller N.L."/>
            <person name="Tettelin H."/>
            <person name="Muzzi A."/>
            <person name="Croucher N.J."/>
            <person name="Angiuoli S.V."/>
            <person name="Oggioni M."/>
            <person name="Dunning Hotopp J.C."/>
            <person name="Hu F.Z."/>
            <person name="Riley D.R."/>
            <person name="Covacci A."/>
            <person name="Mitchell T.J."/>
            <person name="Bentley S.D."/>
            <person name="Kilian M."/>
            <person name="Ehrlich G.D."/>
            <person name="Rappuoli R."/>
            <person name="Moxon E.R."/>
            <person name="Masignani V."/>
        </authorList>
    </citation>
    <scope>NUCLEOTIDE SEQUENCE [LARGE SCALE GENOMIC DNA]</scope>
    <source>
        <strain>Taiwan19F-14</strain>
    </source>
</reference>
<comment type="catalytic activity">
    <reaction evidence="1">
        <text>1-(2-carboxyphenylamino)-1-deoxy-D-ribulose 5-phosphate + H(+) = (1S,2R)-1-C-(indol-3-yl)glycerol 3-phosphate + CO2 + H2O</text>
        <dbReference type="Rhea" id="RHEA:23476"/>
        <dbReference type="ChEBI" id="CHEBI:15377"/>
        <dbReference type="ChEBI" id="CHEBI:15378"/>
        <dbReference type="ChEBI" id="CHEBI:16526"/>
        <dbReference type="ChEBI" id="CHEBI:58613"/>
        <dbReference type="ChEBI" id="CHEBI:58866"/>
        <dbReference type="EC" id="4.1.1.48"/>
    </reaction>
</comment>
<comment type="pathway">
    <text evidence="1">Amino-acid biosynthesis; L-tryptophan biosynthesis; L-tryptophan from chorismate: step 4/5.</text>
</comment>
<comment type="similarity">
    <text evidence="1">Belongs to the TrpC family.</text>
</comment>
<protein>
    <recommendedName>
        <fullName evidence="1">Indole-3-glycerol phosphate synthase</fullName>
        <shortName evidence="1">IGPS</shortName>
        <ecNumber evidence="1">4.1.1.48</ecNumber>
    </recommendedName>
</protein>
<dbReference type="EC" id="4.1.1.48" evidence="1"/>
<dbReference type="EMBL" id="CP000921">
    <property type="protein sequence ID" value="ACO22877.1"/>
    <property type="molecule type" value="Genomic_DNA"/>
</dbReference>
<dbReference type="RefSeq" id="WP_000076535.1">
    <property type="nucleotide sequence ID" value="NC_012469.1"/>
</dbReference>
<dbReference type="SMR" id="C1CT53"/>
<dbReference type="KEGG" id="snt:SPT_1737"/>
<dbReference type="HOGENOM" id="CLU_034247_2_1_9"/>
<dbReference type="UniPathway" id="UPA00035">
    <property type="reaction ID" value="UER00043"/>
</dbReference>
<dbReference type="GO" id="GO:0004425">
    <property type="term" value="F:indole-3-glycerol-phosphate synthase activity"/>
    <property type="evidence" value="ECO:0007669"/>
    <property type="project" value="UniProtKB-UniRule"/>
</dbReference>
<dbReference type="GO" id="GO:0004640">
    <property type="term" value="F:phosphoribosylanthranilate isomerase activity"/>
    <property type="evidence" value="ECO:0007669"/>
    <property type="project" value="TreeGrafter"/>
</dbReference>
<dbReference type="GO" id="GO:0000162">
    <property type="term" value="P:L-tryptophan biosynthetic process"/>
    <property type="evidence" value="ECO:0007669"/>
    <property type="project" value="UniProtKB-UniRule"/>
</dbReference>
<dbReference type="CDD" id="cd00331">
    <property type="entry name" value="IGPS"/>
    <property type="match status" value="1"/>
</dbReference>
<dbReference type="FunFam" id="3.20.20.70:FF:000024">
    <property type="entry name" value="Indole-3-glycerol phosphate synthase"/>
    <property type="match status" value="1"/>
</dbReference>
<dbReference type="Gene3D" id="3.20.20.70">
    <property type="entry name" value="Aldolase class I"/>
    <property type="match status" value="1"/>
</dbReference>
<dbReference type="HAMAP" id="MF_00134_B">
    <property type="entry name" value="IGPS_B"/>
    <property type="match status" value="1"/>
</dbReference>
<dbReference type="InterPro" id="IPR013785">
    <property type="entry name" value="Aldolase_TIM"/>
</dbReference>
<dbReference type="InterPro" id="IPR045186">
    <property type="entry name" value="Indole-3-glycerol_P_synth"/>
</dbReference>
<dbReference type="InterPro" id="IPR013798">
    <property type="entry name" value="Indole-3-glycerol_P_synth_dom"/>
</dbReference>
<dbReference type="InterPro" id="IPR001468">
    <property type="entry name" value="Indole-3-GlycerolPSynthase_CS"/>
</dbReference>
<dbReference type="InterPro" id="IPR011060">
    <property type="entry name" value="RibuloseP-bd_barrel"/>
</dbReference>
<dbReference type="NCBIfam" id="NF001371">
    <property type="entry name" value="PRK00278.1-3"/>
    <property type="match status" value="1"/>
</dbReference>
<dbReference type="NCBIfam" id="NF001377">
    <property type="entry name" value="PRK00278.2-4"/>
    <property type="match status" value="1"/>
</dbReference>
<dbReference type="PANTHER" id="PTHR22854:SF2">
    <property type="entry name" value="INDOLE-3-GLYCEROL-PHOSPHATE SYNTHASE"/>
    <property type="match status" value="1"/>
</dbReference>
<dbReference type="PANTHER" id="PTHR22854">
    <property type="entry name" value="TRYPTOPHAN BIOSYNTHESIS PROTEIN"/>
    <property type="match status" value="1"/>
</dbReference>
<dbReference type="Pfam" id="PF00218">
    <property type="entry name" value="IGPS"/>
    <property type="match status" value="1"/>
</dbReference>
<dbReference type="SUPFAM" id="SSF51366">
    <property type="entry name" value="Ribulose-phoshate binding barrel"/>
    <property type="match status" value="1"/>
</dbReference>
<dbReference type="PROSITE" id="PS00614">
    <property type="entry name" value="IGPS"/>
    <property type="match status" value="1"/>
</dbReference>
<gene>
    <name evidence="1" type="primary">trpC</name>
    <name type="ordered locus">SPT_1737</name>
</gene>
<accession>C1CT53</accession>
<organism>
    <name type="scientific">Streptococcus pneumoniae (strain Taiwan19F-14)</name>
    <dbReference type="NCBI Taxonomy" id="487213"/>
    <lineage>
        <taxon>Bacteria</taxon>
        <taxon>Bacillati</taxon>
        <taxon>Bacillota</taxon>
        <taxon>Bacilli</taxon>
        <taxon>Lactobacillales</taxon>
        <taxon>Streptococcaceae</taxon>
        <taxon>Streptococcus</taxon>
    </lineage>
</organism>
<proteinExistence type="inferred from homology"/>
<evidence type="ECO:0000255" key="1">
    <source>
        <dbReference type="HAMAP-Rule" id="MF_00134"/>
    </source>
</evidence>
<sequence length="255" mass="28887">MSQEFLARILEQKAREVEQMKLEQIQPLRQTYRLAEFLKNHQDCLQVIAEVKKASPSLGDINLDVDIVQQAQTYEENGAVMISVLTDEVFFKGHLDYLREISSQVEIPTLNKDFIIDEKQIIRARNAGATVILLIVAALSEERLKELYDYATELGLEVLVETHNLAELEVAHRLGAEIIGVNNRNLTTFEVDLQTSVDLAPYFEEGRYYISESAIFTGQDAERLAPYFNGILVGTALMQAENVAQRIKELQIDKG</sequence>
<name>TRPC_STRZT</name>